<gene>
    <name type="primary">coaA</name>
    <name type="ordered locus">SP_0839</name>
</gene>
<accession>Q97RH6</accession>
<sequence>MTNEFLHFEKISRQTWQSLHRKTTPPLTEEELESIKSFNDQISLQDVTDIYLPLAHLIQIYKRTKEDLAFSKGIFLQRESKSQPFIIGVSGSVAVGKSTTSRLLQILLSRTFTDATVELVTTDGFLYPNQTLIEQGILNRKGFPESYDMEALLNFLDRIKNGQDVDIPVYSHEVYDIVPEEKQSVKAADFVIVEGINVFQNPQNDRLYITDFFDFSIYVDAGVDDIESWYLDRFLKMLSLAQNDPDSYYYRFTQMPIGEVESFAHQVWISINLTNLQNYIEPTRNRAEVILHKSKNHEIDEIYLKK</sequence>
<dbReference type="EC" id="2.7.1.33"/>
<dbReference type="EMBL" id="AE005672">
    <property type="protein sequence ID" value="AAK74970.1"/>
    <property type="molecule type" value="Genomic_DNA"/>
</dbReference>
<dbReference type="PIR" id="A95097">
    <property type="entry name" value="A95097"/>
</dbReference>
<dbReference type="RefSeq" id="WP_000180487.1">
    <property type="nucleotide sequence ID" value="NZ_CP155539.1"/>
</dbReference>
<dbReference type="SMR" id="Q97RH6"/>
<dbReference type="PaxDb" id="170187-SP_0839"/>
<dbReference type="EnsemblBacteria" id="AAK74970">
    <property type="protein sequence ID" value="AAK74970"/>
    <property type="gene ID" value="SP_0839"/>
</dbReference>
<dbReference type="KEGG" id="spn:SP_0839"/>
<dbReference type="eggNOG" id="COG1072">
    <property type="taxonomic scope" value="Bacteria"/>
</dbReference>
<dbReference type="PhylomeDB" id="Q97RH6"/>
<dbReference type="BioCyc" id="SPNE170187:G1FZB-858-MONOMER"/>
<dbReference type="UniPathway" id="UPA00241">
    <property type="reaction ID" value="UER00352"/>
</dbReference>
<dbReference type="Proteomes" id="UP000000585">
    <property type="component" value="Chromosome"/>
</dbReference>
<dbReference type="GO" id="GO:0005737">
    <property type="term" value="C:cytoplasm"/>
    <property type="evidence" value="ECO:0007669"/>
    <property type="project" value="UniProtKB-SubCell"/>
</dbReference>
<dbReference type="GO" id="GO:0005524">
    <property type="term" value="F:ATP binding"/>
    <property type="evidence" value="ECO:0007669"/>
    <property type="project" value="UniProtKB-UniRule"/>
</dbReference>
<dbReference type="GO" id="GO:0004594">
    <property type="term" value="F:pantothenate kinase activity"/>
    <property type="evidence" value="ECO:0007669"/>
    <property type="project" value="UniProtKB-UniRule"/>
</dbReference>
<dbReference type="GO" id="GO:0015937">
    <property type="term" value="P:coenzyme A biosynthetic process"/>
    <property type="evidence" value="ECO:0007669"/>
    <property type="project" value="UniProtKB-UniRule"/>
</dbReference>
<dbReference type="CDD" id="cd02025">
    <property type="entry name" value="PanK"/>
    <property type="match status" value="1"/>
</dbReference>
<dbReference type="FunFam" id="3.40.50.300:FF:001646">
    <property type="entry name" value="Pantothenate kinase"/>
    <property type="match status" value="1"/>
</dbReference>
<dbReference type="Gene3D" id="3.40.50.300">
    <property type="entry name" value="P-loop containing nucleotide triphosphate hydrolases"/>
    <property type="match status" value="1"/>
</dbReference>
<dbReference type="HAMAP" id="MF_00215">
    <property type="entry name" value="Pantothen_kinase_1"/>
    <property type="match status" value="1"/>
</dbReference>
<dbReference type="InterPro" id="IPR027417">
    <property type="entry name" value="P-loop_NTPase"/>
</dbReference>
<dbReference type="InterPro" id="IPR004566">
    <property type="entry name" value="PanK"/>
</dbReference>
<dbReference type="InterPro" id="IPR006083">
    <property type="entry name" value="PRK/URK"/>
</dbReference>
<dbReference type="NCBIfam" id="TIGR00554">
    <property type="entry name" value="panK_bact"/>
    <property type="match status" value="1"/>
</dbReference>
<dbReference type="PANTHER" id="PTHR10285">
    <property type="entry name" value="URIDINE KINASE"/>
    <property type="match status" value="1"/>
</dbReference>
<dbReference type="Pfam" id="PF00485">
    <property type="entry name" value="PRK"/>
    <property type="match status" value="1"/>
</dbReference>
<dbReference type="PIRSF" id="PIRSF000545">
    <property type="entry name" value="Pantothenate_kin"/>
    <property type="match status" value="1"/>
</dbReference>
<dbReference type="SUPFAM" id="SSF52540">
    <property type="entry name" value="P-loop containing nucleoside triphosphate hydrolases"/>
    <property type="match status" value="1"/>
</dbReference>
<keyword id="KW-0067">ATP-binding</keyword>
<keyword id="KW-0173">Coenzyme A biosynthesis</keyword>
<keyword id="KW-0963">Cytoplasm</keyword>
<keyword id="KW-0418">Kinase</keyword>
<keyword id="KW-0547">Nucleotide-binding</keyword>
<keyword id="KW-1185">Reference proteome</keyword>
<keyword id="KW-0808">Transferase</keyword>
<reference key="1">
    <citation type="journal article" date="2001" name="Science">
        <title>Complete genome sequence of a virulent isolate of Streptococcus pneumoniae.</title>
        <authorList>
            <person name="Tettelin H."/>
            <person name="Nelson K.E."/>
            <person name="Paulsen I.T."/>
            <person name="Eisen J.A."/>
            <person name="Read T.D."/>
            <person name="Peterson S.N."/>
            <person name="Heidelberg J.F."/>
            <person name="DeBoy R.T."/>
            <person name="Haft D.H."/>
            <person name="Dodson R.J."/>
            <person name="Durkin A.S."/>
            <person name="Gwinn M.L."/>
            <person name="Kolonay J.F."/>
            <person name="Nelson W.C."/>
            <person name="Peterson J.D."/>
            <person name="Umayam L.A."/>
            <person name="White O."/>
            <person name="Salzberg S.L."/>
            <person name="Lewis M.R."/>
            <person name="Radune D."/>
            <person name="Holtzapple E.K."/>
            <person name="Khouri H.M."/>
            <person name="Wolf A.M."/>
            <person name="Utterback T.R."/>
            <person name="Hansen C.L."/>
            <person name="McDonald L.A."/>
            <person name="Feldblyum T.V."/>
            <person name="Angiuoli S.V."/>
            <person name="Dickinson T."/>
            <person name="Hickey E.K."/>
            <person name="Holt I.E."/>
            <person name="Loftus B.J."/>
            <person name="Yang F."/>
            <person name="Smith H.O."/>
            <person name="Venter J.C."/>
            <person name="Dougherty B.A."/>
            <person name="Morrison D.A."/>
            <person name="Hollingshead S.K."/>
            <person name="Fraser C.M."/>
        </authorList>
    </citation>
    <scope>NUCLEOTIDE SEQUENCE [LARGE SCALE GENOMIC DNA]</scope>
    <source>
        <strain>ATCC BAA-334 / TIGR4</strain>
    </source>
</reference>
<protein>
    <recommendedName>
        <fullName>Pantothenate kinase</fullName>
        <ecNumber>2.7.1.33</ecNumber>
    </recommendedName>
    <alternativeName>
        <fullName>Pantothenic acid kinase</fullName>
    </alternativeName>
</protein>
<comment type="catalytic activity">
    <reaction>
        <text>(R)-pantothenate + ATP = (R)-4'-phosphopantothenate + ADP + H(+)</text>
        <dbReference type="Rhea" id="RHEA:16373"/>
        <dbReference type="ChEBI" id="CHEBI:10986"/>
        <dbReference type="ChEBI" id="CHEBI:15378"/>
        <dbReference type="ChEBI" id="CHEBI:29032"/>
        <dbReference type="ChEBI" id="CHEBI:30616"/>
        <dbReference type="ChEBI" id="CHEBI:456216"/>
        <dbReference type="EC" id="2.7.1.33"/>
    </reaction>
</comment>
<comment type="pathway">
    <text>Cofactor biosynthesis; coenzyme A biosynthesis; CoA from (R)-pantothenate: step 1/5.</text>
</comment>
<comment type="subcellular location">
    <subcellularLocation>
        <location evidence="1">Cytoplasm</location>
    </subcellularLocation>
</comment>
<comment type="similarity">
    <text evidence="3">Belongs to the prokaryotic pantothenate kinase family.</text>
</comment>
<feature type="chain" id="PRO_0000194454" description="Pantothenate kinase">
    <location>
        <begin position="1"/>
        <end position="306"/>
    </location>
</feature>
<feature type="binding site" evidence="2">
    <location>
        <begin position="91"/>
        <end position="98"/>
    </location>
    <ligand>
        <name>ATP</name>
        <dbReference type="ChEBI" id="CHEBI:30616"/>
    </ligand>
</feature>
<evidence type="ECO:0000250" key="1"/>
<evidence type="ECO:0000255" key="2"/>
<evidence type="ECO:0000305" key="3"/>
<organism>
    <name type="scientific">Streptococcus pneumoniae serotype 4 (strain ATCC BAA-334 / TIGR4)</name>
    <dbReference type="NCBI Taxonomy" id="170187"/>
    <lineage>
        <taxon>Bacteria</taxon>
        <taxon>Bacillati</taxon>
        <taxon>Bacillota</taxon>
        <taxon>Bacilli</taxon>
        <taxon>Lactobacillales</taxon>
        <taxon>Streptococcaceae</taxon>
        <taxon>Streptococcus</taxon>
    </lineage>
</organism>
<proteinExistence type="inferred from homology"/>
<name>COAA_STRPN</name>